<gene>
    <name type="ordered locus">BQ2027_MB0967</name>
</gene>
<name>Y967_MYCBO</name>
<keyword id="KW-1185">Reference proteome</keyword>
<protein>
    <recommendedName>
        <fullName>Uncharacterized protein Mb0967</fullName>
    </recommendedName>
</protein>
<feature type="chain" id="PRO_0000103746" description="Uncharacterized protein Mb0967">
    <location>
        <begin position="1"/>
        <end position="92"/>
    </location>
</feature>
<dbReference type="EMBL" id="LT708304">
    <property type="protein sequence ID" value="SIT99565.1"/>
    <property type="molecule type" value="Genomic_DNA"/>
</dbReference>
<dbReference type="RefSeq" id="NP_854624.1">
    <property type="nucleotide sequence ID" value="NC_002945.3"/>
</dbReference>
<dbReference type="RefSeq" id="WP_003901948.1">
    <property type="nucleotide sequence ID" value="NC_002945.4"/>
</dbReference>
<dbReference type="SMR" id="P64764"/>
<dbReference type="KEGG" id="mbo:BQ2027_MB0967"/>
<dbReference type="Proteomes" id="UP000001419">
    <property type="component" value="Chromosome"/>
</dbReference>
<organism>
    <name type="scientific">Mycobacterium bovis (strain ATCC BAA-935 / AF2122/97)</name>
    <dbReference type="NCBI Taxonomy" id="233413"/>
    <lineage>
        <taxon>Bacteria</taxon>
        <taxon>Bacillati</taxon>
        <taxon>Actinomycetota</taxon>
        <taxon>Actinomycetes</taxon>
        <taxon>Mycobacteriales</taxon>
        <taxon>Mycobacteriaceae</taxon>
        <taxon>Mycobacterium</taxon>
        <taxon>Mycobacterium tuberculosis complex</taxon>
    </lineage>
</organism>
<accession>P64764</accession>
<accession>A0A1R3XX87</accession>
<accession>P71567</accession>
<accession>X2BGM0</accession>
<reference key="1">
    <citation type="journal article" date="2003" name="Proc. Natl. Acad. Sci. U.S.A.">
        <title>The complete genome sequence of Mycobacterium bovis.</title>
        <authorList>
            <person name="Garnier T."/>
            <person name="Eiglmeier K."/>
            <person name="Camus J.-C."/>
            <person name="Medina N."/>
            <person name="Mansoor H."/>
            <person name="Pryor M."/>
            <person name="Duthoy S."/>
            <person name="Grondin S."/>
            <person name="Lacroix C."/>
            <person name="Monsempe C."/>
            <person name="Simon S."/>
            <person name="Harris B."/>
            <person name="Atkin R."/>
            <person name="Doggett J."/>
            <person name="Mayes R."/>
            <person name="Keating L."/>
            <person name="Wheeler P.R."/>
            <person name="Parkhill J."/>
            <person name="Barrell B.G."/>
            <person name="Cole S.T."/>
            <person name="Gordon S.V."/>
            <person name="Hewinson R.G."/>
        </authorList>
    </citation>
    <scope>NUCLEOTIDE SEQUENCE [LARGE SCALE GENOMIC DNA]</scope>
    <source>
        <strain>ATCC BAA-935 / AF2122/97</strain>
    </source>
</reference>
<reference key="2">
    <citation type="journal article" date="2017" name="Genome Announc.">
        <title>Updated reference genome sequence and annotation of Mycobacterium bovis AF2122/97.</title>
        <authorList>
            <person name="Malone K.M."/>
            <person name="Farrell D."/>
            <person name="Stuber T.P."/>
            <person name="Schubert O.T."/>
            <person name="Aebersold R."/>
            <person name="Robbe-Austerman S."/>
            <person name="Gordon S.V."/>
        </authorList>
    </citation>
    <scope>NUCLEOTIDE SEQUENCE [LARGE SCALE GENOMIC DNA]</scope>
    <scope>GENOME REANNOTATION</scope>
    <source>
        <strain>ATCC BAA-935 / AF2122/97</strain>
    </source>
</reference>
<sequence length="92" mass="9737">MGRSATIAMVPKRRDAMNRHSGPILSSGFIASSSNSCPANSLRMPSALAAETLSFDDRAVRRSTHHPGGGYPQKHAINLQSGLCPAYANASR</sequence>
<proteinExistence type="predicted"/>